<organism>
    <name type="scientific">Saccharomyces cerevisiae (strain ATCC 204508 / S288c)</name>
    <name type="common">Baker's yeast</name>
    <dbReference type="NCBI Taxonomy" id="559292"/>
    <lineage>
        <taxon>Eukaryota</taxon>
        <taxon>Fungi</taxon>
        <taxon>Dikarya</taxon>
        <taxon>Ascomycota</taxon>
        <taxon>Saccharomycotina</taxon>
        <taxon>Saccharomycetes</taxon>
        <taxon>Saccharomycetales</taxon>
        <taxon>Saccharomycetaceae</taxon>
        <taxon>Saccharomyces</taxon>
    </lineage>
</organism>
<gene>
    <name evidence="15" type="ordered locus">YNR048W</name>
    <name type="ORF">N3453</name>
</gene>
<accession>P53740</accession>
<accession>D6W1M3</accession>
<name>YN8S_YEAST</name>
<sequence length="393" mass="44542">MGLILRWKEKKQLSSKQNAQKSRKPANTSFRQQRLKAWQPILSPQSVLPLLILMACVFAPIGIGLVVSTISVQRLVVNYTECDALAPAKHFETIPSEYVDYHFSKKVAVQPQWMVLTDPELGNQTCRIQFEVPNHIKKSTYVYYRLTNFNQNYREYVQSLDLDQLKGKALIGNDLDPNCDPLRTVENKTIFPCGLIANSMFNDTFGTTLTGVNDTADYLLTTKGIAWDTDSHRYGKTEYNASDIVPPPNWAKLFPNGYTDDNIPDLQNWEQFKIWMRTAALPNFYKLAMKNETNGLGKGIYIADIELNYPVRSFYGTKSFVLTTNSIIGAGNEALGIVYLIVAGIATLFAILFLIKVIFKPRPMHDHSYLNFENSDTPFDESSVVSIPLREIL</sequence>
<proteinExistence type="evidence at protein level"/>
<dbReference type="EMBL" id="Z71663">
    <property type="protein sequence ID" value="CAA96329.1"/>
    <property type="molecule type" value="Genomic_DNA"/>
</dbReference>
<dbReference type="EMBL" id="BK006947">
    <property type="protein sequence ID" value="DAA10589.1"/>
    <property type="molecule type" value="Genomic_DNA"/>
</dbReference>
<dbReference type="PIR" id="S63379">
    <property type="entry name" value="S63379"/>
</dbReference>
<dbReference type="SMR" id="P53740"/>
<dbReference type="BioGRID" id="35873">
    <property type="interactions" value="57"/>
</dbReference>
<dbReference type="ComplexPortal" id="CPX-1026">
    <property type="entry name" value="DNF3-CRF1 P4-ATPase complex"/>
</dbReference>
<dbReference type="DIP" id="DIP-1250N"/>
<dbReference type="FunCoup" id="P53740">
    <property type="interactions" value="561"/>
</dbReference>
<dbReference type="IntAct" id="P53740">
    <property type="interactions" value="5"/>
</dbReference>
<dbReference type="MINT" id="P53740"/>
<dbReference type="STRING" id="4932.YNR048W"/>
<dbReference type="TCDB" id="8.A.27.1.7">
    <property type="family name" value="the cdc50 p-type atpase lipid flippase subunit (cdc50) family"/>
</dbReference>
<dbReference type="GlyGen" id="P53740">
    <property type="glycosylation" value="7 sites"/>
</dbReference>
<dbReference type="PaxDb" id="4932-YNR048W"/>
<dbReference type="PeptideAtlas" id="P53740"/>
<dbReference type="EnsemblFungi" id="YNR048W_mRNA">
    <property type="protein sequence ID" value="YNR048W"/>
    <property type="gene ID" value="YNR048W"/>
</dbReference>
<dbReference type="GeneID" id="855784"/>
<dbReference type="KEGG" id="sce:YNR048W"/>
<dbReference type="AGR" id="SGD:S000005331"/>
<dbReference type="SGD" id="S000005331">
    <property type="gene designation" value="YNR048W"/>
</dbReference>
<dbReference type="VEuPathDB" id="FungiDB:YNR048W"/>
<dbReference type="eggNOG" id="KOG2952">
    <property type="taxonomic scope" value="Eukaryota"/>
</dbReference>
<dbReference type="GeneTree" id="ENSGT00390000004660"/>
<dbReference type="HOGENOM" id="CLU_025025_0_1_1"/>
<dbReference type="InParanoid" id="P53740"/>
<dbReference type="OMA" id="IPWSMFN"/>
<dbReference type="OrthoDB" id="340608at2759"/>
<dbReference type="BioCyc" id="YEAST:G3O-33355-MONOMER"/>
<dbReference type="BioGRID-ORCS" id="855784">
    <property type="hits" value="1 hit in 10 CRISPR screens"/>
</dbReference>
<dbReference type="PRO" id="PR:P53740"/>
<dbReference type="Proteomes" id="UP000002311">
    <property type="component" value="Chromosome XIV"/>
</dbReference>
<dbReference type="RNAct" id="P53740">
    <property type="molecule type" value="protein"/>
</dbReference>
<dbReference type="GO" id="GO:0005783">
    <property type="term" value="C:endoplasmic reticulum"/>
    <property type="evidence" value="ECO:0007005"/>
    <property type="project" value="SGD"/>
</dbReference>
<dbReference type="GO" id="GO:0005794">
    <property type="term" value="C:Golgi apparatus"/>
    <property type="evidence" value="ECO:0000318"/>
    <property type="project" value="GO_Central"/>
</dbReference>
<dbReference type="GO" id="GO:1990531">
    <property type="term" value="C:phospholipid-translocating ATPase complex"/>
    <property type="evidence" value="ECO:0000353"/>
    <property type="project" value="ComplexPortal"/>
</dbReference>
<dbReference type="GO" id="GO:0005886">
    <property type="term" value="C:plasma membrane"/>
    <property type="evidence" value="ECO:0000318"/>
    <property type="project" value="GO_Central"/>
</dbReference>
<dbReference type="GO" id="GO:0005802">
    <property type="term" value="C:trans-Golgi network"/>
    <property type="evidence" value="ECO:0000353"/>
    <property type="project" value="SGD"/>
</dbReference>
<dbReference type="GO" id="GO:0045332">
    <property type="term" value="P:phospholipid translocation"/>
    <property type="evidence" value="ECO:0000316"/>
    <property type="project" value="SGD"/>
</dbReference>
<dbReference type="InterPro" id="IPR005045">
    <property type="entry name" value="CDC50/LEM3_fam"/>
</dbReference>
<dbReference type="PANTHER" id="PTHR10926:SF0">
    <property type="entry name" value="CDC50, ISOFORM A"/>
    <property type="match status" value="1"/>
</dbReference>
<dbReference type="PANTHER" id="PTHR10926">
    <property type="entry name" value="CELL CYCLE CONTROL PROTEIN 50"/>
    <property type="match status" value="1"/>
</dbReference>
<dbReference type="Pfam" id="PF03381">
    <property type="entry name" value="CDC50"/>
    <property type="match status" value="1"/>
</dbReference>
<dbReference type="PIRSF" id="PIRSF015840">
    <property type="entry name" value="DUF284_TM_euk"/>
    <property type="match status" value="1"/>
</dbReference>
<comment type="function">
    <text evidence="7 11 13">Accessory component of a P4-ATPase flippase complex which catalyzes the hydrolysis of ATP coupled to the transport of phosphatidylcholine and small amounts of phosphatidylethanolamine from the lumen to the cytosolic leaflet of the trans-Golgi network and ensures the maintenance of asymmetric distribution of phospholipids (PubMed:22791719). May be involved in transport from early endosomes to the trans-Golgi network (TGN) (Probable).</text>
</comment>
<comment type="subunit">
    <text evidence="5 6 7">Component of a flippase complex consisting of DNF3 and YNR048W/CRF1 (PubMed:22791719). Interacts with DNF3; the interaction is direct and required for proper expression and endoplasmic reticulum (ER) export of either partner (PubMed:17093059, PubMed:19411703, PubMed:22791719).</text>
</comment>
<comment type="interaction">
    <interactant intactId="EBI-28524">
        <id>P53740</id>
    </interactant>
    <interactant intactId="EBI-3142">
        <id>Q12674</id>
        <label>DNF3</label>
    </interactant>
    <organismsDiffer>false</organismsDiffer>
    <experiments>4</experiments>
</comment>
<comment type="subcellular location">
    <subcellularLocation>
        <location evidence="5">Golgi apparatus</location>
        <location evidence="5">trans-Golgi network membrane</location>
        <topology evidence="2">Multi-pass membrane protein</topology>
    </subcellularLocation>
</comment>
<comment type="miscellaneous">
    <text evidence="3">Present with 4510 molecules/cell in log phase SD medium.</text>
</comment>
<comment type="similarity">
    <text evidence="10">Belongs to the CDC50/LEM3 family.</text>
</comment>
<protein>
    <recommendedName>
        <fullName evidence="9">Phospholipid-transporting ATPase accessory subunit CRF1</fullName>
    </recommendedName>
    <alternativeName>
        <fullName evidence="8">CDC50/ROS3 family protein 1</fullName>
        <shortName>CRF1</shortName>
    </alternativeName>
</protein>
<reference key="1">
    <citation type="journal article" date="1997" name="Nature">
        <title>The nucleotide sequence of Saccharomyces cerevisiae chromosome XIV and its evolutionary implications.</title>
        <authorList>
            <person name="Philippsen P."/>
            <person name="Kleine K."/>
            <person name="Poehlmann R."/>
            <person name="Duesterhoeft A."/>
            <person name="Hamberg K."/>
            <person name="Hegemann J.H."/>
            <person name="Obermaier B."/>
            <person name="Urrestarazu L.A."/>
            <person name="Aert R."/>
            <person name="Albermann K."/>
            <person name="Altmann R."/>
            <person name="Andre B."/>
            <person name="Baladron V."/>
            <person name="Ballesta J.P.G."/>
            <person name="Becam A.-M."/>
            <person name="Beinhauer J.D."/>
            <person name="Boskovic J."/>
            <person name="Buitrago M.J."/>
            <person name="Bussereau F."/>
            <person name="Coster F."/>
            <person name="Crouzet M."/>
            <person name="D'Angelo M."/>
            <person name="Dal Pero F."/>
            <person name="De Antoni A."/>
            <person name="del Rey F."/>
            <person name="Doignon F."/>
            <person name="Domdey H."/>
            <person name="Dubois E."/>
            <person name="Fiedler T.A."/>
            <person name="Fleig U."/>
            <person name="Floeth M."/>
            <person name="Fritz C."/>
            <person name="Gaillardin C."/>
            <person name="Garcia-Cantalejo J.M."/>
            <person name="Glansdorff N."/>
            <person name="Goffeau A."/>
            <person name="Gueldener U."/>
            <person name="Herbert C.J."/>
            <person name="Heumann K."/>
            <person name="Heuss-Neitzel D."/>
            <person name="Hilbert H."/>
            <person name="Hinni K."/>
            <person name="Iraqui Houssaini I."/>
            <person name="Jacquet M."/>
            <person name="Jimenez A."/>
            <person name="Jonniaux J.-L."/>
            <person name="Karpfinger-Hartl L."/>
            <person name="Lanfranchi G."/>
            <person name="Lepingle A."/>
            <person name="Levesque H."/>
            <person name="Lyck R."/>
            <person name="Maftahi M."/>
            <person name="Mallet L."/>
            <person name="Maurer C.T.C."/>
            <person name="Messenguy F."/>
            <person name="Mewes H.-W."/>
            <person name="Moestl D."/>
            <person name="Nasr F."/>
            <person name="Nicaud J.-M."/>
            <person name="Niedenthal R.K."/>
            <person name="Pandolfo D."/>
            <person name="Pierard A."/>
            <person name="Piravandi E."/>
            <person name="Planta R.J."/>
            <person name="Pohl T.M."/>
            <person name="Purnelle B."/>
            <person name="Rebischung C."/>
            <person name="Remacha M.A."/>
            <person name="Revuelta J.L."/>
            <person name="Rinke M."/>
            <person name="Saiz J.E."/>
            <person name="Sartorello F."/>
            <person name="Scherens B."/>
            <person name="Sen-Gupta M."/>
            <person name="Soler-Mira A."/>
            <person name="Urbanus J.H.M."/>
            <person name="Valle G."/>
            <person name="Van Dyck L."/>
            <person name="Verhasselt P."/>
            <person name="Vierendeels F."/>
            <person name="Vissers S."/>
            <person name="Voet M."/>
            <person name="Volckaert G."/>
            <person name="Wach A."/>
            <person name="Wambutt R."/>
            <person name="Wedler H."/>
            <person name="Zollner A."/>
            <person name="Hani J."/>
        </authorList>
    </citation>
    <scope>NUCLEOTIDE SEQUENCE [LARGE SCALE GENOMIC DNA]</scope>
    <source>
        <strain>ATCC 204508 / S288c</strain>
    </source>
</reference>
<reference key="2">
    <citation type="journal article" date="2014" name="G3 (Bethesda)">
        <title>The reference genome sequence of Saccharomyces cerevisiae: Then and now.</title>
        <authorList>
            <person name="Engel S.R."/>
            <person name="Dietrich F.S."/>
            <person name="Fisk D.G."/>
            <person name="Binkley G."/>
            <person name="Balakrishnan R."/>
            <person name="Costanzo M.C."/>
            <person name="Dwight S.S."/>
            <person name="Hitz B.C."/>
            <person name="Karra K."/>
            <person name="Nash R.S."/>
            <person name="Weng S."/>
            <person name="Wong E.D."/>
            <person name="Lloyd P."/>
            <person name="Skrzypek M.S."/>
            <person name="Miyasato S.R."/>
            <person name="Simison M."/>
            <person name="Cherry J.M."/>
        </authorList>
    </citation>
    <scope>GENOME REANNOTATION</scope>
    <source>
        <strain>ATCC 204508 / S288c</strain>
    </source>
</reference>
<reference key="3">
    <citation type="journal article" date="2003" name="Nature">
        <title>Global analysis of protein expression in yeast.</title>
        <authorList>
            <person name="Ghaemmaghami S."/>
            <person name="Huh W.-K."/>
            <person name="Bower K."/>
            <person name="Howson R.W."/>
            <person name="Belle A."/>
            <person name="Dephoure N."/>
            <person name="O'Shea E.K."/>
            <person name="Weissman J.S."/>
        </authorList>
    </citation>
    <scope>LEVEL OF PROTEIN EXPRESSION [LARGE SCALE ANALYSIS]</scope>
</reference>
<reference key="4">
    <citation type="journal article" date="2004" name="Mol. Biol. Cell">
        <title>Cdc50p, a protein required for polarized growth, associates with the Drs2p P-type ATPase implicated in phospholipid translocation in Saccharomyces cerevisiae.</title>
        <authorList>
            <person name="Saito K."/>
            <person name="Fujimura-Kamada K."/>
            <person name="Furuta N."/>
            <person name="Kato U."/>
            <person name="Umeda M."/>
            <person name="Tanaka K."/>
        </authorList>
    </citation>
    <scope>FUNCTION</scope>
</reference>
<reference key="5">
    <citation type="journal article" date="2006" name="Proc. Natl. Acad. Sci. U.S.A.">
        <title>A global topology map of the Saccharomyces cerevisiae membrane proteome.</title>
        <authorList>
            <person name="Kim H."/>
            <person name="Melen K."/>
            <person name="Oesterberg M."/>
            <person name="von Heijne G."/>
        </authorList>
    </citation>
    <scope>TOPOLOGY [LARGE SCALE ANALYSIS]</scope>
    <source>
        <strain>ATCC 208353 / W303-1A</strain>
    </source>
</reference>
<reference key="6">
    <citation type="journal article" date="2007" name="Mol. Biol. Cell">
        <title>Endocytic recycling in yeast is regulated by putative phospholipid translocases and the Ypt31p/32p-Rcy1p pathway.</title>
        <authorList>
            <person name="Furuta N."/>
            <person name="Fujimura-Kamada K."/>
            <person name="Saito K."/>
            <person name="Yamamoto T."/>
            <person name="Tanaka K."/>
        </authorList>
    </citation>
    <scope>FUNCTION</scope>
    <scope>SUBCELLULAR LOCATION</scope>
    <scope>INTERACTION WITH DNF3</scope>
</reference>
<reference key="7">
    <citation type="journal article" date="2009" name="J. Biol. Chem.">
        <title>Cdc50p plays a vital role in the ATPase reaction cycle of the putative aminophospholipid transporter Drs2p.</title>
        <authorList>
            <person name="Lenoir G."/>
            <person name="Williamson P."/>
            <person name="Puts C.F."/>
            <person name="Holthuis J.C."/>
        </authorList>
    </citation>
    <scope>INTERACTION WITH DNF3</scope>
</reference>
<reference key="8">
    <citation type="journal article" date="2012" name="J. Biol. Chem.">
        <title>Mapping functional interactions in a heterodimeric phospholipid pump.</title>
        <authorList>
            <person name="Puts C.F."/>
            <person name="Panatala R."/>
            <person name="Hennrich H."/>
            <person name="Tsareva A."/>
            <person name="Williamson P."/>
            <person name="Holthuis J.C."/>
        </authorList>
    </citation>
    <scope>FUNCTION</scope>
    <scope>IDENTIFICATION IN A COMPLEX WITH DNF3</scope>
    <scope>INTERACTION WITH DNF3</scope>
    <scope>DISULFIDE BOND</scope>
    <scope>MUTAGENESIS OF CYS-82 AND CYS-126</scope>
</reference>
<evidence type="ECO:0000250" key="1">
    <source>
        <dbReference type="UniProtKB" id="P25656"/>
    </source>
</evidence>
<evidence type="ECO:0000255" key="2"/>
<evidence type="ECO:0000269" key="3">
    <source>
    </source>
</evidence>
<evidence type="ECO:0000269" key="4">
    <source>
    </source>
</evidence>
<evidence type="ECO:0000269" key="5">
    <source>
    </source>
</evidence>
<evidence type="ECO:0000269" key="6">
    <source>
    </source>
</evidence>
<evidence type="ECO:0000269" key="7">
    <source>
    </source>
</evidence>
<evidence type="ECO:0000303" key="8">
    <source>
    </source>
</evidence>
<evidence type="ECO:0000303" key="9">
    <source>
    </source>
</evidence>
<evidence type="ECO:0000305" key="10"/>
<evidence type="ECO:0000305" key="11">
    <source>
    </source>
</evidence>
<evidence type="ECO:0000305" key="12">
    <source>
    </source>
</evidence>
<evidence type="ECO:0000305" key="13">
    <source>
    </source>
</evidence>
<evidence type="ECO:0000305" key="14">
    <source>
    </source>
</evidence>
<evidence type="ECO:0000312" key="15">
    <source>
        <dbReference type="SGD" id="S000005331"/>
    </source>
</evidence>
<feature type="chain" id="PRO_0000207672" description="Phospholipid-transporting ATPase accessory subunit CRF1">
    <location>
        <begin position="1"/>
        <end position="393"/>
    </location>
</feature>
<feature type="topological domain" description="Cytoplasmic" evidence="12">
    <location>
        <begin position="1"/>
        <end position="46"/>
    </location>
</feature>
<feature type="transmembrane region" description="Helical" evidence="2">
    <location>
        <begin position="47"/>
        <end position="67"/>
    </location>
</feature>
<feature type="topological domain" description="Lumenal" evidence="12">
    <location>
        <begin position="68"/>
        <end position="334"/>
    </location>
</feature>
<feature type="transmembrane region" description="Helical" evidence="2">
    <location>
        <begin position="335"/>
        <end position="355"/>
    </location>
</feature>
<feature type="topological domain" description="Cytoplasmic" evidence="4">
    <location>
        <begin position="356"/>
        <end position="393"/>
    </location>
</feature>
<feature type="region of interest" description="Confers specificity for binding DNF3" evidence="7">
    <location>
        <begin position="70"/>
        <end position="332"/>
    </location>
</feature>
<feature type="glycosylation site" description="N-linked (GlcNAc...) asparagine" evidence="2">
    <location>
        <position position="78"/>
    </location>
</feature>
<feature type="glycosylation site" description="N-linked (GlcNAc...) asparagine" evidence="2">
    <location>
        <position position="123"/>
    </location>
</feature>
<feature type="glycosylation site" description="N-linked (GlcNAc...) asparagine" evidence="2">
    <location>
        <position position="187"/>
    </location>
</feature>
<feature type="glycosylation site" description="N-linked (GlcNAc...) asparagine" evidence="2">
    <location>
        <position position="202"/>
    </location>
</feature>
<feature type="glycosylation site" description="N-linked (GlcNAc...) asparagine" evidence="2">
    <location>
        <position position="213"/>
    </location>
</feature>
<feature type="glycosylation site" description="N-linked (GlcNAc...) asparagine" evidence="2">
    <location>
        <position position="240"/>
    </location>
</feature>
<feature type="glycosylation site" description="N-linked (GlcNAc...) asparagine" evidence="2">
    <location>
        <position position="291"/>
    </location>
</feature>
<feature type="disulfide bond" evidence="14">
    <location>
        <begin position="82"/>
        <end position="126"/>
    </location>
</feature>
<feature type="disulfide bond" evidence="1">
    <location>
        <begin position="179"/>
        <end position="193"/>
    </location>
</feature>
<feature type="mutagenesis site" description="Reduces interaction with DNF3." evidence="7">
    <original>C</original>
    <variation>A</variation>
    <location>
        <position position="82"/>
    </location>
</feature>
<feature type="mutagenesis site" description="Reduces interaction with DNF3." evidence="7">
    <original>C</original>
    <variation>A</variation>
    <location>
        <position position="126"/>
    </location>
</feature>
<keyword id="KW-1015">Disulfide bond</keyword>
<keyword id="KW-0325">Glycoprotein</keyword>
<keyword id="KW-0333">Golgi apparatus</keyword>
<keyword id="KW-0472">Membrane</keyword>
<keyword id="KW-1185">Reference proteome</keyword>
<keyword id="KW-0812">Transmembrane</keyword>
<keyword id="KW-1133">Transmembrane helix</keyword>